<accession>A1X148</accession>
<feature type="chain" id="PRO_0000279732" description="Caveolin-2">
    <location>
        <begin position="1"/>
        <end position="162"/>
    </location>
</feature>
<feature type="topological domain" description="Cytoplasmic" evidence="4">
    <location>
        <begin position="1"/>
        <end position="86"/>
    </location>
</feature>
<feature type="intramembrane region" description="Helical" evidence="4">
    <location>
        <begin position="87"/>
        <end position="107"/>
    </location>
</feature>
<feature type="topological domain" description="Cytoplasmic" evidence="4">
    <location>
        <begin position="108"/>
        <end position="162"/>
    </location>
</feature>
<feature type="modified residue" description="Phosphotyrosine" evidence="2">
    <location>
        <position position="19"/>
    </location>
</feature>
<feature type="modified residue" description="Phosphoserine" evidence="3">
    <location>
        <position position="20"/>
    </location>
</feature>
<feature type="modified residue" description="Phosphoserine" evidence="2">
    <location>
        <position position="23"/>
    </location>
</feature>
<feature type="modified residue" description="Phosphoserine" evidence="2">
    <location>
        <position position="36"/>
    </location>
</feature>
<evidence type="ECO:0000250" key="1"/>
<evidence type="ECO:0000250" key="2">
    <source>
        <dbReference type="UniProtKB" id="P51636"/>
    </source>
</evidence>
<evidence type="ECO:0000250" key="3">
    <source>
        <dbReference type="UniProtKB" id="Q9WVC3"/>
    </source>
</evidence>
<evidence type="ECO:0000255" key="4"/>
<evidence type="ECO:0000305" key="5"/>
<protein>
    <recommendedName>
        <fullName>Caveolin-2</fullName>
    </recommendedName>
</protein>
<sequence>MGLESEKADVQLFMDDDAYSRHSGVDFVEAEKFSASGPDRDPHRLNSHLQLGFQDVIAEPETTHSFDKVWICSHALFEISKYVLYKFLTFFLAIPLAFAAGILFAILSCLHIWIIMPFVKTCLMVLPSVQTIWKSVTDVVIAPLCTSVGRSFSSVSLQLSQD</sequence>
<dbReference type="EMBL" id="DP000274">
    <property type="protein sequence ID" value="ABL76164.1"/>
    <property type="molecule type" value="Genomic_DNA"/>
</dbReference>
<dbReference type="SMR" id="A1X148"/>
<dbReference type="Proteomes" id="UP000694863">
    <property type="component" value="Unplaced"/>
</dbReference>
<dbReference type="GO" id="GO:0005901">
    <property type="term" value="C:caveola"/>
    <property type="evidence" value="ECO:0000250"/>
    <property type="project" value="UniProtKB"/>
</dbReference>
<dbReference type="GO" id="GO:0031410">
    <property type="term" value="C:cytoplasmic vesicle"/>
    <property type="evidence" value="ECO:0007669"/>
    <property type="project" value="TreeGrafter"/>
</dbReference>
<dbReference type="GO" id="GO:0005925">
    <property type="term" value="C:focal adhesion"/>
    <property type="evidence" value="ECO:0007669"/>
    <property type="project" value="TreeGrafter"/>
</dbReference>
<dbReference type="GO" id="GO:0000139">
    <property type="term" value="C:Golgi membrane"/>
    <property type="evidence" value="ECO:0007669"/>
    <property type="project" value="UniProtKB-SubCell"/>
</dbReference>
<dbReference type="GO" id="GO:0005634">
    <property type="term" value="C:nucleus"/>
    <property type="evidence" value="ECO:0007669"/>
    <property type="project" value="UniProtKB-SubCell"/>
</dbReference>
<dbReference type="GO" id="GO:0048471">
    <property type="term" value="C:perinuclear region of cytoplasm"/>
    <property type="evidence" value="ECO:0000250"/>
    <property type="project" value="UniProtKB"/>
</dbReference>
<dbReference type="GO" id="GO:0044853">
    <property type="term" value="C:plasma membrane raft"/>
    <property type="evidence" value="ECO:0000250"/>
    <property type="project" value="UniProtKB"/>
</dbReference>
<dbReference type="GO" id="GO:0042383">
    <property type="term" value="C:sarcolemma"/>
    <property type="evidence" value="ECO:0007669"/>
    <property type="project" value="TreeGrafter"/>
</dbReference>
<dbReference type="GO" id="GO:0031748">
    <property type="term" value="F:D1 dopamine receptor binding"/>
    <property type="evidence" value="ECO:0000250"/>
    <property type="project" value="UniProtKB"/>
</dbReference>
<dbReference type="GO" id="GO:0060090">
    <property type="term" value="F:molecular adaptor activity"/>
    <property type="evidence" value="ECO:0007669"/>
    <property type="project" value="TreeGrafter"/>
</dbReference>
<dbReference type="GO" id="GO:0019901">
    <property type="term" value="F:protein kinase binding"/>
    <property type="evidence" value="ECO:0007669"/>
    <property type="project" value="TreeGrafter"/>
</dbReference>
<dbReference type="GO" id="GO:0070836">
    <property type="term" value="P:caveola assembly"/>
    <property type="evidence" value="ECO:0000250"/>
    <property type="project" value="UniProtKB"/>
</dbReference>
<dbReference type="GO" id="GO:0007029">
    <property type="term" value="P:endoplasmic reticulum organization"/>
    <property type="evidence" value="ECO:0000250"/>
    <property type="project" value="UniProtKB"/>
</dbReference>
<dbReference type="GO" id="GO:0008286">
    <property type="term" value="P:insulin receptor signaling pathway"/>
    <property type="evidence" value="ECO:0007669"/>
    <property type="project" value="TreeGrafter"/>
</dbReference>
<dbReference type="GO" id="GO:0007005">
    <property type="term" value="P:mitochondrion organization"/>
    <property type="evidence" value="ECO:0000250"/>
    <property type="project" value="UniProtKB"/>
</dbReference>
<dbReference type="GO" id="GO:0001937">
    <property type="term" value="P:negative regulation of endothelial cell proliferation"/>
    <property type="evidence" value="ECO:0000250"/>
    <property type="project" value="UniProtKB"/>
</dbReference>
<dbReference type="GO" id="GO:0060161">
    <property type="term" value="P:positive regulation of dopamine receptor signaling pathway"/>
    <property type="evidence" value="ECO:0000250"/>
    <property type="project" value="UniProtKB"/>
</dbReference>
<dbReference type="GO" id="GO:0051480">
    <property type="term" value="P:regulation of cytosolic calcium ion concentration"/>
    <property type="evidence" value="ECO:0007669"/>
    <property type="project" value="TreeGrafter"/>
</dbReference>
<dbReference type="GO" id="GO:0048741">
    <property type="term" value="P:skeletal muscle fiber development"/>
    <property type="evidence" value="ECO:0000250"/>
    <property type="project" value="UniProtKB"/>
</dbReference>
<dbReference type="GO" id="GO:0048278">
    <property type="term" value="P:vesicle docking"/>
    <property type="evidence" value="ECO:0000250"/>
    <property type="project" value="UniProtKB"/>
</dbReference>
<dbReference type="GO" id="GO:0006906">
    <property type="term" value="P:vesicle fusion"/>
    <property type="evidence" value="ECO:0000250"/>
    <property type="project" value="UniProtKB"/>
</dbReference>
<dbReference type="InterPro" id="IPR001612">
    <property type="entry name" value="Caveolin"/>
</dbReference>
<dbReference type="PANTHER" id="PTHR10844">
    <property type="entry name" value="CAVEOLIN"/>
    <property type="match status" value="1"/>
</dbReference>
<dbReference type="PANTHER" id="PTHR10844:SF3">
    <property type="entry name" value="CAVEOLIN-2"/>
    <property type="match status" value="1"/>
</dbReference>
<dbReference type="Pfam" id="PF01146">
    <property type="entry name" value="Caveolin"/>
    <property type="match status" value="1"/>
</dbReference>
<reference key="1">
    <citation type="submission" date="2006-12" db="EMBL/GenBank/DDBJ databases">
        <title>NISC comparative sequencing initiative.</title>
        <authorList>
            <person name="Antonellis A."/>
            <person name="Ayele K."/>
            <person name="Benjamin B."/>
            <person name="Blakesley R.W."/>
            <person name="Boakye A."/>
            <person name="Bouffard G.G."/>
            <person name="Brinkley C."/>
            <person name="Brooks S."/>
            <person name="Chu G."/>
            <person name="Coleman H."/>
            <person name="Engle J."/>
            <person name="Gestole M."/>
            <person name="Greene A."/>
            <person name="Guan X."/>
            <person name="Gupta J."/>
            <person name="Haghighi P."/>
            <person name="Han J."/>
            <person name="Hansen N."/>
            <person name="Ho S.-L."/>
            <person name="Hu P."/>
            <person name="Hunter G."/>
            <person name="Hurle B."/>
            <person name="Idol J.R."/>
            <person name="Kwong P."/>
            <person name="Laric P."/>
            <person name="Larson S."/>
            <person name="Lee-Lin S.-Q."/>
            <person name="Legaspi R."/>
            <person name="Madden M."/>
            <person name="Maduro Q.L."/>
            <person name="Maduro V.B."/>
            <person name="Margulies E.H."/>
            <person name="Masiello C."/>
            <person name="Maskeri B."/>
            <person name="McDowell J."/>
            <person name="Mojidi H.A."/>
            <person name="Mullikin J.C."/>
            <person name="Oestreicher J.S."/>
            <person name="Park M."/>
            <person name="Portnoy M.E."/>
            <person name="Prasad A."/>
            <person name="Puri O."/>
            <person name="Reddix-Dugue N."/>
            <person name="Schandler K."/>
            <person name="Schueler M.G."/>
            <person name="Sison C."/>
            <person name="Stantripop S."/>
            <person name="Stephen E."/>
            <person name="Taye A."/>
            <person name="Thomas J.W."/>
            <person name="Thomas P.J."/>
            <person name="Tsipouri V."/>
            <person name="Ung L."/>
            <person name="Vogt J.L."/>
            <person name="Wetherby K.D."/>
            <person name="Young A."/>
            <person name="Green E.D."/>
        </authorList>
    </citation>
    <scope>NUCLEOTIDE SEQUENCE [LARGE SCALE GENOMIC DNA]</scope>
</reference>
<gene>
    <name type="primary">CAV2</name>
</gene>
<comment type="function">
    <text evidence="1">May act as a scaffolding protein within caveolar membranes. Interacts directly with G-protein alpha subunits and can functionally regulate their activity. Acts as an accessory protein in conjunction with CAV1 in targeting to lipid rafts and driving caveolae formation. The Ser-36 phosphorylated form has a role in modulating mitosis in endothelial cells. Positive regulator of cellular mitogenesis of the MAPK signaling pathway. Required for the insulin-stimulated nuclear translocation and activation of MAPK1 and STAT3, and the subsequent regulation of cell cycle progression (By similarity).</text>
</comment>
<comment type="subunit">
    <text evidence="1">Monomer or homodimer. Interacts with CAV1; the interaction forms a stable heterooligomeric complex that is required for targeting to lipid rafts and for caveolae formation. Tyrosine phosphorylated forms do not form heterooligomers with the Tyr-19-phosphorylated form existing as a monomer or dimer. Interacts (tyrosine phosphorylated form) with the SH2 domain-containing proteins, RASA1, NCK1 and SRC. Interacts (tyrosine phosphorylated form) with INSR. Interacts (Tyr-19 phosphorylated form) with MAPK1 (phosphorylated form); the interaction, promoted by insulin, leads to nuclear location and MAPK1 activation. Interacts with STAT3; the interaction is increased on insulin-induced tyrosine phosphorylation leading to STAT activation (By similarity).</text>
</comment>
<comment type="subcellular location">
    <subcellularLocation>
        <location evidence="1">Nucleus</location>
    </subcellularLocation>
    <subcellularLocation>
        <location>Golgi apparatus membrane</location>
        <topology>Peripheral membrane protein</topology>
    </subcellularLocation>
    <subcellularLocation>
        <location>Cell membrane</location>
        <topology>Peripheral membrane protein</topology>
    </subcellularLocation>
    <subcellularLocation>
        <location>Membrane</location>
        <location>Caveola</location>
        <topology>Peripheral membrane protein</topology>
    </subcellularLocation>
    <text evidence="1">Potential hairpin-like structure in the membrane. Membrane protein of caveolae. Tyr-19-phosphorylated form is enriched at sites of cell-cell contact and is translocated to the nucleus in complex with MAPK1 in response to insulin. CAV1-mediated Ser-23-phosphorylated form locates to the plasma membrane. Ser-36-phosphorylated form resides in intracellular compartments (By similarity).</text>
</comment>
<comment type="PTM">
    <text evidence="1">Phosphorylated on serine and tyrosine residues. CAV1 promotes phosphorylation on Ser-23 which then targets the complex to the plasma membrane, lipid rafts and caveolae. Phosphorylation on Ser-36 appears to modulate mitosis in endothelial cells. Phosphorylation on Tyr-19 is required for insulin-induced phosphorylation of MAPK1 and DNA binding of STAT3. Tyrosine phosphorylation is induced by both EGF and insulin (By similarity).</text>
</comment>
<comment type="similarity">
    <text evidence="5">Belongs to the caveolin family.</text>
</comment>
<organism>
    <name type="scientific">Echinops telfairi</name>
    <name type="common">Lesser hedgehog tenrec</name>
    <dbReference type="NCBI Taxonomy" id="9371"/>
    <lineage>
        <taxon>Eukaryota</taxon>
        <taxon>Metazoa</taxon>
        <taxon>Chordata</taxon>
        <taxon>Craniata</taxon>
        <taxon>Vertebrata</taxon>
        <taxon>Euteleostomi</taxon>
        <taxon>Mammalia</taxon>
        <taxon>Eutheria</taxon>
        <taxon>Afrotheria</taxon>
        <taxon>Tenrecidae</taxon>
        <taxon>Tenrecinae</taxon>
        <taxon>Echinops</taxon>
    </lineage>
</organism>
<proteinExistence type="inferred from homology"/>
<keyword id="KW-1003">Cell membrane</keyword>
<keyword id="KW-0333">Golgi apparatus</keyword>
<keyword id="KW-0472">Membrane</keyword>
<keyword id="KW-0539">Nucleus</keyword>
<keyword id="KW-0597">Phosphoprotein</keyword>
<name>CAV2_ECHTE</name>